<keyword id="KW-0072">Autophagy</keyword>
<keyword id="KW-0968">Cytoplasmic vesicle</keyword>
<keyword id="KW-0256">Endoplasmic reticulum</keyword>
<keyword id="KW-0333">Golgi apparatus</keyword>
<keyword id="KW-0445">Lipid transport</keyword>
<keyword id="KW-0472">Membrane</keyword>
<keyword id="KW-0597">Phosphoprotein</keyword>
<keyword id="KW-0812">Transmembrane</keyword>
<keyword id="KW-1133">Transmembrane helix</keyword>
<keyword id="KW-0813">Transport</keyword>
<proteinExistence type="inferred from homology"/>
<reference key="1">
    <citation type="journal article" date="2007" name="Autophagy">
        <title>ATG genes involved in non-selective autophagy are conserved from yeast to man, but the selective Cvt and pexophagy pathways also require organism-specific genes.</title>
        <authorList>
            <person name="Meijer W.H."/>
            <person name="van der Klei I.J."/>
            <person name="Veenhuis M."/>
            <person name="Kiel J.A.K.W."/>
        </authorList>
    </citation>
    <scope>NUCLEOTIDE SEQUENCE [GENOMIC DNA]</scope>
    <scope>FUNCTION</scope>
    <source>
        <strain>ATCC 34438 / CBS 4732 / DSM 70277 / JCM 3621 / NBRC 1476 / NRRL Y-5445</strain>
    </source>
</reference>
<sequence>MGDLNKHTFLSRVFGSASNPLLNDDNNDIEFSINNLQDTFEEHQVESPPRAPHPINVNSEDESSSETESASNEDLLYDQKRELYQQVESELRQDDYDTVPESLMMERRRPHEGSTRTIGTKIPPSPAEPPIGPNITQWGEKARGIASRTLDNIPKTIAKGISFQLPANASSKLPPPPLSYRRETSVGGETEMAQNINEQRQLRGRLGLLSPMERALWLWSNVSNLDTFLEDVYGYYTGNGYRCIILSRVSDLLIIVFVVWLTSFMGNCVDYNQLMNGNATKYSDVVVDKCYSKISLSQKLFFLVLFAILVLRIKSFYSHFKDLKEIKNFYNLLLGVSDEELQTISWSTIVKKIKVLRDQNTNALISGNQNLRGDDLKSKKRLSAHDIANRLMRKENYMIAIFNKNVLAPALTIPFINHHFLTKTLEWNLKLCIFDFVFNTDGQLKQAVLSEHKRLALATEMRKRFRLAGILSIFLTPFLVIYFLLYFFLKFFYDIKTNPSLVGSREYSPYARWKLREFNELPHMFDKRLKMSRARATEYINQFPKEATNIILNFVAFVTGSLVTILVVLTVLGHENFLNFELTEGRTVLFYISTLGAVFTICKGSVSENDTVFDPEASLRYVAQFTHYLPNSWNGRFHTEEVKNEFCKLFNLRLILVLKEITSLIMLPYILYCRLPDVSEKVIDFFREFSVHVDGLGYVCTFAMFEFDSKDKPVRSQAANDDDDLKQEYYTADDDKMVKSYLYFLESYGNESVRKTGKEPAVDRISRRPGKKNLLRSAMMNNSMMDKSRGAQSTVRYPPQFRSPNLAESVYTKRQNIDLMEDTTAGLSTDTRNYLQTLNNSTLLGESFQHGFPVEDTTHHEEDADSEDDDEAGVLGLINQIYKHKEGVN</sequence>
<protein>
    <recommendedName>
        <fullName>Autophagy-related protein 9</fullName>
    </recommendedName>
</protein>
<organism>
    <name type="scientific">Pichia angusta</name>
    <name type="common">Yeast</name>
    <name type="synonym">Hansenula polymorpha</name>
    <dbReference type="NCBI Taxonomy" id="870730"/>
    <lineage>
        <taxon>Eukaryota</taxon>
        <taxon>Fungi</taxon>
        <taxon>Dikarya</taxon>
        <taxon>Ascomycota</taxon>
        <taxon>Saccharomycotina</taxon>
        <taxon>Pichiomycetes</taxon>
        <taxon>Pichiales</taxon>
        <taxon>Pichiaceae</taxon>
        <taxon>Ogataea</taxon>
    </lineage>
</organism>
<evidence type="ECO:0000250" key="1">
    <source>
        <dbReference type="UniProtKB" id="O74312"/>
    </source>
</evidence>
<evidence type="ECO:0000250" key="2">
    <source>
        <dbReference type="UniProtKB" id="Q12142"/>
    </source>
</evidence>
<evidence type="ECO:0000255" key="3"/>
<evidence type="ECO:0000256" key="4">
    <source>
        <dbReference type="SAM" id="MobiDB-lite"/>
    </source>
</evidence>
<evidence type="ECO:0000269" key="5">
    <source>
    </source>
</evidence>
<evidence type="ECO:0000305" key="6"/>
<gene>
    <name type="primary">ATG9</name>
</gene>
<accession>A7KAI7</accession>
<dbReference type="EMBL" id="EF102888">
    <property type="protein sequence ID" value="ABO31292.1"/>
    <property type="molecule type" value="Genomic_DNA"/>
</dbReference>
<dbReference type="SMR" id="A7KAI7"/>
<dbReference type="GO" id="GO:0005776">
    <property type="term" value="C:autophagosome"/>
    <property type="evidence" value="ECO:0007669"/>
    <property type="project" value="TreeGrafter"/>
</dbReference>
<dbReference type="GO" id="GO:0030659">
    <property type="term" value="C:cytoplasmic vesicle membrane"/>
    <property type="evidence" value="ECO:0007669"/>
    <property type="project" value="UniProtKB-SubCell"/>
</dbReference>
<dbReference type="GO" id="GO:0005789">
    <property type="term" value="C:endoplasmic reticulum membrane"/>
    <property type="evidence" value="ECO:0007669"/>
    <property type="project" value="UniProtKB-SubCell"/>
</dbReference>
<dbReference type="GO" id="GO:0000139">
    <property type="term" value="C:Golgi membrane"/>
    <property type="evidence" value="ECO:0007669"/>
    <property type="project" value="UniProtKB-SubCell"/>
</dbReference>
<dbReference type="GO" id="GO:0034045">
    <property type="term" value="C:phagophore assembly site membrane"/>
    <property type="evidence" value="ECO:0007669"/>
    <property type="project" value="UniProtKB-SubCell"/>
</dbReference>
<dbReference type="GO" id="GO:0000422">
    <property type="term" value="P:autophagy of mitochondrion"/>
    <property type="evidence" value="ECO:0007669"/>
    <property type="project" value="TreeGrafter"/>
</dbReference>
<dbReference type="GO" id="GO:0006869">
    <property type="term" value="P:lipid transport"/>
    <property type="evidence" value="ECO:0007669"/>
    <property type="project" value="UniProtKB-KW"/>
</dbReference>
<dbReference type="GO" id="GO:0034727">
    <property type="term" value="P:piecemeal microautophagy of the nucleus"/>
    <property type="evidence" value="ECO:0007669"/>
    <property type="project" value="TreeGrafter"/>
</dbReference>
<dbReference type="GO" id="GO:0034497">
    <property type="term" value="P:protein localization to phagophore assembly site"/>
    <property type="evidence" value="ECO:0007669"/>
    <property type="project" value="TreeGrafter"/>
</dbReference>
<dbReference type="GO" id="GO:0061709">
    <property type="term" value="P:reticulophagy"/>
    <property type="evidence" value="ECO:0007669"/>
    <property type="project" value="TreeGrafter"/>
</dbReference>
<dbReference type="InterPro" id="IPR007241">
    <property type="entry name" value="Autophagy-rel_prot_9"/>
</dbReference>
<dbReference type="PANTHER" id="PTHR13038">
    <property type="entry name" value="APG9 AUTOPHAGY 9"/>
    <property type="match status" value="1"/>
</dbReference>
<dbReference type="PANTHER" id="PTHR13038:SF10">
    <property type="entry name" value="AUTOPHAGY-RELATED PROTEIN 9"/>
    <property type="match status" value="1"/>
</dbReference>
<dbReference type="Pfam" id="PF04109">
    <property type="entry name" value="ATG9"/>
    <property type="match status" value="1"/>
</dbReference>
<name>ATG9_PICAN</name>
<feature type="chain" id="PRO_0000317913" description="Autophagy-related protein 9">
    <location>
        <begin position="1"/>
        <end position="889"/>
    </location>
</feature>
<feature type="topological domain" description="Cytoplasmic" evidence="6">
    <location>
        <begin position="1"/>
        <end position="248"/>
    </location>
</feature>
<feature type="transmembrane region" description="Helical" evidence="3">
    <location>
        <begin position="249"/>
        <end position="269"/>
    </location>
</feature>
<feature type="topological domain" description="Lumenal" evidence="6">
    <location>
        <begin position="270"/>
        <end position="299"/>
    </location>
</feature>
<feature type="transmembrane region" description="Helical" evidence="3">
    <location>
        <begin position="300"/>
        <end position="320"/>
    </location>
</feature>
<feature type="topological domain" description="Cytoplasmic" evidence="6">
    <location>
        <begin position="321"/>
        <end position="395"/>
    </location>
</feature>
<feature type="intramembrane region" evidence="1">
    <location>
        <position position="396"/>
    </location>
</feature>
<feature type="topological domain" description="Cytoplasmic" evidence="6">
    <location>
        <begin position="397"/>
        <end position="468"/>
    </location>
</feature>
<feature type="transmembrane region" description="Helical" evidence="3">
    <location>
        <begin position="469"/>
        <end position="489"/>
    </location>
</feature>
<feature type="topological domain" description="Lumenal" evidence="6">
    <location>
        <begin position="490"/>
        <end position="549"/>
    </location>
</feature>
<feature type="transmembrane region" description="Helical" evidence="3">
    <location>
        <begin position="550"/>
        <end position="570"/>
    </location>
</feature>
<feature type="topological domain" description="Cytoplasmic" evidence="6">
    <location>
        <begin position="571"/>
        <end position="651"/>
    </location>
</feature>
<feature type="intramembrane region" evidence="1">
    <location>
        <begin position="652"/>
        <end position="672"/>
    </location>
</feature>
<feature type="topological domain" description="Cytoplasmic" evidence="6">
    <location>
        <begin position="673"/>
        <end position="889"/>
    </location>
</feature>
<feature type="region of interest" description="Disordered" evidence="4">
    <location>
        <begin position="41"/>
        <end position="77"/>
    </location>
</feature>
<feature type="region of interest" description="Disordered" evidence="4">
    <location>
        <begin position="108"/>
        <end position="132"/>
    </location>
</feature>
<feature type="compositionally biased region" description="Pro residues" evidence="4">
    <location>
        <begin position="123"/>
        <end position="132"/>
    </location>
</feature>
<comment type="function">
    <text evidence="2 5">Phospholipid scramblase involved in autophagy and cytoplasm to vacuole transport (Cvt) vesicle formation (PubMed:17204848). Cycles between the preautophagosomal structure/phagophore assembly site (PAS) and the cytoplasmic vesicle pool and supplies membrane for the growing autophagosome. Lipid scramblase activity plays a key role in preautophagosomal structure/phagophore assembly by distributing the phospholipids that arrive through ATG2 from the cytoplasmic to the luminal leaflet of the bilayer, thereby driving autophagosomal membrane expansion. Required for mitophagy. Also involved in endoplasmic reticulum-specific autophagic process and is essential for the survival of cells subjected to severe ER stress. Different machineries are required for anterograde trafficking to the PAS during either the Cvt pathway or bulk autophagy and for retrograde trafficking (By similarity).</text>
</comment>
<comment type="catalytic activity">
    <reaction evidence="2">
        <text>a 1,2-diacyl-sn-glycero-3-phosphocholine(in) = a 1,2-diacyl-sn-glycero-3-phosphocholine(out)</text>
        <dbReference type="Rhea" id="RHEA:38571"/>
        <dbReference type="ChEBI" id="CHEBI:57643"/>
    </reaction>
</comment>
<comment type="catalytic activity">
    <reaction evidence="2">
        <text>a 1,2-diacyl-sn-glycero-3-phospho-L-serine(in) = a 1,2-diacyl-sn-glycero-3-phospho-L-serine(out)</text>
        <dbReference type="Rhea" id="RHEA:38663"/>
        <dbReference type="ChEBI" id="CHEBI:57262"/>
    </reaction>
</comment>
<comment type="catalytic activity">
    <reaction evidence="2">
        <text>a 1,2-diacyl-sn-glycero-3-phosphoethanolamine(in) = a 1,2-diacyl-sn-glycero-3-phosphoethanolamine(out)</text>
        <dbReference type="Rhea" id="RHEA:38895"/>
        <dbReference type="ChEBI" id="CHEBI:64612"/>
    </reaction>
</comment>
<comment type="catalytic activity">
    <reaction evidence="2">
        <text>a 1,2-diacyl-sn-glycero-3-phospho-(1D-myo-inositol-3-phosphate)(in) = a 1,2-diacyl-sn-glycero-3-phospho-(1D-myo-inositol-3-phosphate)(out)</text>
        <dbReference type="Rhea" id="RHEA:67920"/>
        <dbReference type="ChEBI" id="CHEBI:58088"/>
    </reaction>
</comment>
<comment type="subunit">
    <text evidence="1">Homotrimer; forms a homotrimer with a central pore that forms a path between the two membrane leaflets.</text>
</comment>
<comment type="subcellular location">
    <subcellularLocation>
        <location evidence="2">Preautophagosomal structure membrane</location>
        <topology evidence="2">Multi-pass membrane protein</topology>
    </subcellularLocation>
    <subcellularLocation>
        <location evidence="2">Cytoplasmic vesicle membrane</location>
        <topology evidence="2">Multi-pass membrane protein</topology>
    </subcellularLocation>
    <subcellularLocation>
        <location evidence="2">Golgi apparatus membrane</location>
        <topology evidence="2">Multi-pass membrane protein</topology>
    </subcellularLocation>
    <subcellularLocation>
        <location evidence="2">Endoplasmic reticulum membrane</location>
        <topology evidence="2">Multi-pass membrane protein</topology>
    </subcellularLocation>
</comment>
<comment type="domain">
    <text evidence="1">Forms a homotrimer with a solvated central pore, which is connected laterally to the cytosol through the cavity within each protomer. Acts as a lipid scramblase that uses its central pore to function: the central pore opens laterally to accommodate lipid headgroups, thereby enabling lipid flipping and redistribution of lipids added to the outer leaflet of ATG9-containing vesicles, thereby enabling growth into autophagosomes.</text>
</comment>
<comment type="PTM">
    <text evidence="2">Phosphorylated by ATG1. ATG1 phosphorylation is required for preautophagosome elongation.</text>
</comment>
<comment type="similarity">
    <text evidence="6">Belongs to the ATG9 family.</text>
</comment>